<dbReference type="EMBL" id="AABR03049402">
    <property type="status" value="NOT_ANNOTATED_CDS"/>
    <property type="molecule type" value="Genomic_DNA"/>
</dbReference>
<dbReference type="EMBL" id="AABR03049711">
    <property type="status" value="NOT_ANNOTATED_CDS"/>
    <property type="molecule type" value="Genomic_DNA"/>
</dbReference>
<dbReference type="EMBL" id="AABR03050272">
    <property type="status" value="NOT_ANNOTATED_CDS"/>
    <property type="molecule type" value="Genomic_DNA"/>
</dbReference>
<dbReference type="EMBL" id="BC097450">
    <property type="protein sequence ID" value="AAH97450.1"/>
    <property type="molecule type" value="mRNA"/>
</dbReference>
<dbReference type="RefSeq" id="NP_001020912.1">
    <molecule id="Q4V8C3-2"/>
    <property type="nucleotide sequence ID" value="NM_001025741.2"/>
</dbReference>
<dbReference type="RefSeq" id="NP_001386640.1">
    <molecule id="Q4V8C3-1"/>
    <property type="nucleotide sequence ID" value="NM_001399711.1"/>
</dbReference>
<dbReference type="RefSeq" id="XP_063118205.1">
    <molecule id="Q4V8C3-2"/>
    <property type="nucleotide sequence ID" value="XM_063262135.1"/>
</dbReference>
<dbReference type="SMR" id="Q4V8C3"/>
<dbReference type="BioGRID" id="263717">
    <property type="interactions" value="1"/>
</dbReference>
<dbReference type="FunCoup" id="Q4V8C3">
    <property type="interactions" value="757"/>
</dbReference>
<dbReference type="IntAct" id="Q4V8C3">
    <property type="interactions" value="1"/>
</dbReference>
<dbReference type="STRING" id="10116.ENSRNOP00000067636"/>
<dbReference type="iPTMnet" id="Q4V8C3"/>
<dbReference type="PhosphoSitePlus" id="Q4V8C3"/>
<dbReference type="GeneID" id="362783"/>
<dbReference type="KEGG" id="rno:362783"/>
<dbReference type="UCSC" id="RGD:1306374">
    <molecule id="Q4V8C3-1"/>
    <property type="organism name" value="rat"/>
</dbReference>
<dbReference type="AGR" id="RGD:1306374"/>
<dbReference type="CTD" id="2009"/>
<dbReference type="RGD" id="1306374">
    <property type="gene designation" value="Eml1"/>
</dbReference>
<dbReference type="eggNOG" id="KOG2106">
    <property type="taxonomic scope" value="Eukaryota"/>
</dbReference>
<dbReference type="InParanoid" id="Q4V8C3"/>
<dbReference type="PhylomeDB" id="Q4V8C3"/>
<dbReference type="PRO" id="PR:Q4V8C3"/>
<dbReference type="Proteomes" id="UP000002494">
    <property type="component" value="Unplaced"/>
</dbReference>
<dbReference type="GO" id="GO:0005829">
    <property type="term" value="C:cytosol"/>
    <property type="evidence" value="ECO:0000250"/>
    <property type="project" value="UniProtKB"/>
</dbReference>
<dbReference type="GO" id="GO:0005874">
    <property type="term" value="C:microtubule"/>
    <property type="evidence" value="ECO:0000250"/>
    <property type="project" value="UniProtKB"/>
</dbReference>
<dbReference type="GO" id="GO:0015630">
    <property type="term" value="C:microtubule cytoskeleton"/>
    <property type="evidence" value="ECO:0000266"/>
    <property type="project" value="RGD"/>
</dbReference>
<dbReference type="GO" id="GO:1990023">
    <property type="term" value="C:mitotic spindle midzone"/>
    <property type="evidence" value="ECO:0000266"/>
    <property type="project" value="RGD"/>
</dbReference>
<dbReference type="GO" id="GO:0097431">
    <property type="term" value="C:mitotic spindle pole"/>
    <property type="evidence" value="ECO:0000266"/>
    <property type="project" value="RGD"/>
</dbReference>
<dbReference type="GO" id="GO:0048471">
    <property type="term" value="C:perinuclear region of cytoplasm"/>
    <property type="evidence" value="ECO:0007669"/>
    <property type="project" value="UniProtKB-SubCell"/>
</dbReference>
<dbReference type="GO" id="GO:0008017">
    <property type="term" value="F:microtubule binding"/>
    <property type="evidence" value="ECO:0000250"/>
    <property type="project" value="UniProtKB"/>
</dbReference>
<dbReference type="GO" id="GO:0015631">
    <property type="term" value="F:tubulin binding"/>
    <property type="evidence" value="ECO:0000250"/>
    <property type="project" value="UniProtKB"/>
</dbReference>
<dbReference type="GO" id="GO:0007420">
    <property type="term" value="P:brain development"/>
    <property type="evidence" value="ECO:0000250"/>
    <property type="project" value="UniProtKB"/>
</dbReference>
<dbReference type="GO" id="GO:0002244">
    <property type="term" value="P:hematopoietic progenitor cell differentiation"/>
    <property type="evidence" value="ECO:0000266"/>
    <property type="project" value="RGD"/>
</dbReference>
<dbReference type="GO" id="GO:0000226">
    <property type="term" value="P:microtubule cytoskeleton organization"/>
    <property type="evidence" value="ECO:0000250"/>
    <property type="project" value="UniProtKB"/>
</dbReference>
<dbReference type="GO" id="GO:0007052">
    <property type="term" value="P:mitotic spindle organization"/>
    <property type="evidence" value="ECO:0000250"/>
    <property type="project" value="UniProtKB"/>
</dbReference>
<dbReference type="GO" id="GO:0007405">
    <property type="term" value="P:neuroblast proliferation"/>
    <property type="evidence" value="ECO:0000250"/>
    <property type="project" value="UniProtKB"/>
</dbReference>
<dbReference type="CDD" id="cd21947">
    <property type="entry name" value="TD_EMAP1"/>
    <property type="match status" value="1"/>
</dbReference>
<dbReference type="FunFam" id="2.130.10.10:FF:000011">
    <property type="entry name" value="Echinoderm microtubule-associated protein-like 2 isoform 1"/>
    <property type="match status" value="1"/>
</dbReference>
<dbReference type="FunFam" id="2.130.10.10:FF:000005">
    <property type="entry name" value="Putative echinoderm microtubule-associated protein-like 1"/>
    <property type="match status" value="1"/>
</dbReference>
<dbReference type="Gene3D" id="2.130.10.10">
    <property type="entry name" value="YVTN repeat-like/Quinoprotein amine dehydrogenase"/>
    <property type="match status" value="2"/>
</dbReference>
<dbReference type="InterPro" id="IPR055442">
    <property type="entry name" value="Beta-prop_EML-like_2nd"/>
</dbReference>
<dbReference type="InterPro" id="IPR055439">
    <property type="entry name" value="Beta-prop_EML_1st"/>
</dbReference>
<dbReference type="InterPro" id="IPR005108">
    <property type="entry name" value="HELP"/>
</dbReference>
<dbReference type="InterPro" id="IPR011047">
    <property type="entry name" value="Quinoprotein_ADH-like_sf"/>
</dbReference>
<dbReference type="InterPro" id="IPR015943">
    <property type="entry name" value="WD40/YVTN_repeat-like_dom_sf"/>
</dbReference>
<dbReference type="InterPro" id="IPR036322">
    <property type="entry name" value="WD40_repeat_dom_sf"/>
</dbReference>
<dbReference type="InterPro" id="IPR001680">
    <property type="entry name" value="WD40_rpt"/>
</dbReference>
<dbReference type="InterPro" id="IPR050630">
    <property type="entry name" value="WD_repeat_EMAP"/>
</dbReference>
<dbReference type="PANTHER" id="PTHR13720:SF22">
    <property type="entry name" value="ECHINODERM MICROTUBULE-ASSOCIATED PROTEIN-LIKE 1"/>
    <property type="match status" value="1"/>
</dbReference>
<dbReference type="PANTHER" id="PTHR13720">
    <property type="entry name" value="WD-40 REPEAT PROTEIN"/>
    <property type="match status" value="1"/>
</dbReference>
<dbReference type="Pfam" id="PF23409">
    <property type="entry name" value="Beta-prop_EML"/>
    <property type="match status" value="1"/>
</dbReference>
<dbReference type="Pfam" id="PF23414">
    <property type="entry name" value="Beta-prop_EML_2"/>
    <property type="match status" value="1"/>
</dbReference>
<dbReference type="Pfam" id="PF03451">
    <property type="entry name" value="HELP"/>
    <property type="match status" value="1"/>
</dbReference>
<dbReference type="SMART" id="SM00320">
    <property type="entry name" value="WD40"/>
    <property type="match status" value="10"/>
</dbReference>
<dbReference type="SUPFAM" id="SSF50998">
    <property type="entry name" value="Quinoprotein alcohol dehydrogenase-like"/>
    <property type="match status" value="1"/>
</dbReference>
<dbReference type="SUPFAM" id="SSF50978">
    <property type="entry name" value="WD40 repeat-like"/>
    <property type="match status" value="1"/>
</dbReference>
<dbReference type="PROSITE" id="PS00678">
    <property type="entry name" value="WD_REPEATS_1"/>
    <property type="match status" value="1"/>
</dbReference>
<dbReference type="PROSITE" id="PS50082">
    <property type="entry name" value="WD_REPEATS_2"/>
    <property type="match status" value="3"/>
</dbReference>
<dbReference type="PROSITE" id="PS50294">
    <property type="entry name" value="WD_REPEATS_REGION"/>
    <property type="match status" value="2"/>
</dbReference>
<evidence type="ECO:0000250" key="1"/>
<evidence type="ECO:0000250" key="2">
    <source>
        <dbReference type="UniProtKB" id="O00423"/>
    </source>
</evidence>
<evidence type="ECO:0000250" key="3">
    <source>
        <dbReference type="UniProtKB" id="Q05BC3"/>
    </source>
</evidence>
<evidence type="ECO:0000250" key="4">
    <source>
        <dbReference type="UniProtKB" id="Q9HC35"/>
    </source>
</evidence>
<evidence type="ECO:0000255" key="5"/>
<evidence type="ECO:0000256" key="6">
    <source>
        <dbReference type="SAM" id="MobiDB-lite"/>
    </source>
</evidence>
<evidence type="ECO:0000303" key="7">
    <source>
    </source>
</evidence>
<evidence type="ECO:0000305" key="8"/>
<evidence type="ECO:0007744" key="9">
    <source>
    </source>
</evidence>
<gene>
    <name type="primary">Eml1</name>
</gene>
<comment type="function">
    <text evidence="3">Modulates the assembly and organization of the microtubule cytoskeleton, and probably plays a role in regulating the orientation of the mitotic spindle and the orientation of the plane of cell division. Required for normal proliferation of neuronal progenitor cells in the developing brain and for normal brain development. Does not affect neuron migration per se.</text>
</comment>
<comment type="subunit">
    <text evidence="2 3 4">Homotrimer; self-association is mediated by the N-terminal coiled coil (By similarity). Does not interact with EML3 (By similarity). Binds repolymerizing microtubules (By similarity). Binds unpolymerized tubulins via its WD repeat region (By similarity). Interacts with TASOR (By similarity).</text>
</comment>
<comment type="subcellular location">
    <subcellularLocation>
        <location evidence="3">Cytoplasm</location>
    </subcellularLocation>
    <subcellularLocation>
        <location evidence="3">Cytoplasm</location>
        <location evidence="3">Perinuclear region</location>
    </subcellularLocation>
    <subcellularLocation>
        <location evidence="3">Cytoplasm</location>
        <location evidence="3">Cytoskeleton</location>
    </subcellularLocation>
    <text evidence="3">Detected in cytoplasmic punctae. Co-localizes with microtubules. Enriched in perinuclear regions during interphase and in the region of spindle microtubules during metaphase. Enriched at the midzone during telophase and cytokinesis. Detected at growth cones in neurons.</text>
</comment>
<comment type="alternative products">
    <event type="alternative splicing"/>
    <isoform>
        <id>Q4V8C3-1</id>
        <name>1</name>
        <sequence type="displayed"/>
    </isoform>
    <isoform>
        <id>Q4V8C3-2</id>
        <name>2</name>
        <sequence type="described" ref="VSP_024479"/>
    </isoform>
</comment>
<comment type="domain">
    <text evidence="2">Contains a tandem atypical propeller in EMLs (TAPE) domain. The N-terminal beta-propeller is formed by canonical WD repeats; in contrast, the second beta-propeller contains one blade that is formed by discontinuous parts of the polypeptide chain.</text>
</comment>
<comment type="domain">
    <text evidence="2">The N-terminal coiled coil is required for association with microtubules.</text>
</comment>
<comment type="similarity">
    <text evidence="8">Belongs to the WD repeat EMAP family.</text>
</comment>
<protein>
    <recommendedName>
        <fullName>Echinoderm microtubule-associated protein-like 1</fullName>
        <shortName>EMAP-1</shortName>
    </recommendedName>
</protein>
<name>EMAL1_RAT</name>
<organism>
    <name type="scientific">Rattus norvegicus</name>
    <name type="common">Rat</name>
    <dbReference type="NCBI Taxonomy" id="10116"/>
    <lineage>
        <taxon>Eukaryota</taxon>
        <taxon>Metazoa</taxon>
        <taxon>Chordata</taxon>
        <taxon>Craniata</taxon>
        <taxon>Vertebrata</taxon>
        <taxon>Euteleostomi</taxon>
        <taxon>Mammalia</taxon>
        <taxon>Eutheria</taxon>
        <taxon>Euarchontoglires</taxon>
        <taxon>Glires</taxon>
        <taxon>Rodentia</taxon>
        <taxon>Myomorpha</taxon>
        <taxon>Muroidea</taxon>
        <taxon>Muridae</taxon>
        <taxon>Murinae</taxon>
        <taxon>Rattus</taxon>
    </lineage>
</organism>
<reference key="1">
    <citation type="journal article" date="2004" name="Nature">
        <title>Genome sequence of the Brown Norway rat yields insights into mammalian evolution.</title>
        <authorList>
            <person name="Gibbs R.A."/>
            <person name="Weinstock G.M."/>
            <person name="Metzker M.L."/>
            <person name="Muzny D.M."/>
            <person name="Sodergren E.J."/>
            <person name="Scherer S."/>
            <person name="Scott G."/>
            <person name="Steffen D."/>
            <person name="Worley K.C."/>
            <person name="Burch P.E."/>
            <person name="Okwuonu G."/>
            <person name="Hines S."/>
            <person name="Lewis L."/>
            <person name="Deramo C."/>
            <person name="Delgado O."/>
            <person name="Dugan-Rocha S."/>
            <person name="Miner G."/>
            <person name="Morgan M."/>
            <person name="Hawes A."/>
            <person name="Gill R."/>
            <person name="Holt R.A."/>
            <person name="Adams M.D."/>
            <person name="Amanatides P.G."/>
            <person name="Baden-Tillson H."/>
            <person name="Barnstead M."/>
            <person name="Chin S."/>
            <person name="Evans C.A."/>
            <person name="Ferriera S."/>
            <person name="Fosler C."/>
            <person name="Glodek A."/>
            <person name="Gu Z."/>
            <person name="Jennings D."/>
            <person name="Kraft C.L."/>
            <person name="Nguyen T."/>
            <person name="Pfannkoch C.M."/>
            <person name="Sitter C."/>
            <person name="Sutton G.G."/>
            <person name="Venter J.C."/>
            <person name="Woodage T."/>
            <person name="Smith D."/>
            <person name="Lee H.-M."/>
            <person name="Gustafson E."/>
            <person name="Cahill P."/>
            <person name="Kana A."/>
            <person name="Doucette-Stamm L."/>
            <person name="Weinstock K."/>
            <person name="Fechtel K."/>
            <person name="Weiss R.B."/>
            <person name="Dunn D.M."/>
            <person name="Green E.D."/>
            <person name="Blakesley R.W."/>
            <person name="Bouffard G.G."/>
            <person name="De Jong P.J."/>
            <person name="Osoegawa K."/>
            <person name="Zhu B."/>
            <person name="Marra M."/>
            <person name="Schein J."/>
            <person name="Bosdet I."/>
            <person name="Fjell C."/>
            <person name="Jones S."/>
            <person name="Krzywinski M."/>
            <person name="Mathewson C."/>
            <person name="Siddiqui A."/>
            <person name="Wye N."/>
            <person name="McPherson J."/>
            <person name="Zhao S."/>
            <person name="Fraser C.M."/>
            <person name="Shetty J."/>
            <person name="Shatsman S."/>
            <person name="Geer K."/>
            <person name="Chen Y."/>
            <person name="Abramzon S."/>
            <person name="Nierman W.C."/>
            <person name="Havlak P.H."/>
            <person name="Chen R."/>
            <person name="Durbin K.J."/>
            <person name="Egan A."/>
            <person name="Ren Y."/>
            <person name="Song X.-Z."/>
            <person name="Li B."/>
            <person name="Liu Y."/>
            <person name="Qin X."/>
            <person name="Cawley S."/>
            <person name="Cooney A.J."/>
            <person name="D'Souza L.M."/>
            <person name="Martin K."/>
            <person name="Wu J.Q."/>
            <person name="Gonzalez-Garay M.L."/>
            <person name="Jackson A.R."/>
            <person name="Kalafus K.J."/>
            <person name="McLeod M.P."/>
            <person name="Milosavljevic A."/>
            <person name="Virk D."/>
            <person name="Volkov A."/>
            <person name="Wheeler D.A."/>
            <person name="Zhang Z."/>
            <person name="Bailey J.A."/>
            <person name="Eichler E.E."/>
            <person name="Tuzun E."/>
            <person name="Birney E."/>
            <person name="Mongin E."/>
            <person name="Ureta-Vidal A."/>
            <person name="Woodwark C."/>
            <person name="Zdobnov E."/>
            <person name="Bork P."/>
            <person name="Suyama M."/>
            <person name="Torrents D."/>
            <person name="Alexandersson M."/>
            <person name="Trask B.J."/>
            <person name="Young J.M."/>
            <person name="Huang H."/>
            <person name="Wang H."/>
            <person name="Xing H."/>
            <person name="Daniels S."/>
            <person name="Gietzen D."/>
            <person name="Schmidt J."/>
            <person name="Stevens K."/>
            <person name="Vitt U."/>
            <person name="Wingrove J."/>
            <person name="Camara F."/>
            <person name="Mar Alba M."/>
            <person name="Abril J.F."/>
            <person name="Guigo R."/>
            <person name="Smit A."/>
            <person name="Dubchak I."/>
            <person name="Rubin E.M."/>
            <person name="Couronne O."/>
            <person name="Poliakov A."/>
            <person name="Huebner N."/>
            <person name="Ganten D."/>
            <person name="Goesele C."/>
            <person name="Hummel O."/>
            <person name="Kreitler T."/>
            <person name="Lee Y.-A."/>
            <person name="Monti J."/>
            <person name="Schulz H."/>
            <person name="Zimdahl H."/>
            <person name="Himmelbauer H."/>
            <person name="Lehrach H."/>
            <person name="Jacob H.J."/>
            <person name="Bromberg S."/>
            <person name="Gullings-Handley J."/>
            <person name="Jensen-Seaman M.I."/>
            <person name="Kwitek A.E."/>
            <person name="Lazar J."/>
            <person name="Pasko D."/>
            <person name="Tonellato P.J."/>
            <person name="Twigger S."/>
            <person name="Ponting C.P."/>
            <person name="Duarte J.M."/>
            <person name="Rice S."/>
            <person name="Goodstadt L."/>
            <person name="Beatson S.A."/>
            <person name="Emes R.D."/>
            <person name="Winter E.E."/>
            <person name="Webber C."/>
            <person name="Brandt P."/>
            <person name="Nyakatura G."/>
            <person name="Adetobi M."/>
            <person name="Chiaromonte F."/>
            <person name="Elnitski L."/>
            <person name="Eswara P."/>
            <person name="Hardison R.C."/>
            <person name="Hou M."/>
            <person name="Kolbe D."/>
            <person name="Makova K."/>
            <person name="Miller W."/>
            <person name="Nekrutenko A."/>
            <person name="Riemer C."/>
            <person name="Schwartz S."/>
            <person name="Taylor J."/>
            <person name="Yang S."/>
            <person name="Zhang Y."/>
            <person name="Lindpaintner K."/>
            <person name="Andrews T.D."/>
            <person name="Caccamo M."/>
            <person name="Clamp M."/>
            <person name="Clarke L."/>
            <person name="Curwen V."/>
            <person name="Durbin R.M."/>
            <person name="Eyras E."/>
            <person name="Searle S.M."/>
            <person name="Cooper G.M."/>
            <person name="Batzoglou S."/>
            <person name="Brudno M."/>
            <person name="Sidow A."/>
            <person name="Stone E.A."/>
            <person name="Payseur B.A."/>
            <person name="Bourque G."/>
            <person name="Lopez-Otin C."/>
            <person name="Puente X.S."/>
            <person name="Chakrabarti K."/>
            <person name="Chatterji S."/>
            <person name="Dewey C."/>
            <person name="Pachter L."/>
            <person name="Bray N."/>
            <person name="Yap V.B."/>
            <person name="Caspi A."/>
            <person name="Tesler G."/>
            <person name="Pevzner P.A."/>
            <person name="Haussler D."/>
            <person name="Roskin K.M."/>
            <person name="Baertsch R."/>
            <person name="Clawson H."/>
            <person name="Furey T.S."/>
            <person name="Hinrichs A.S."/>
            <person name="Karolchik D."/>
            <person name="Kent W.J."/>
            <person name="Rosenbloom K.R."/>
            <person name="Trumbower H."/>
            <person name="Weirauch M."/>
            <person name="Cooper D.N."/>
            <person name="Stenson P.D."/>
            <person name="Ma B."/>
            <person name="Brent M."/>
            <person name="Arumugam M."/>
            <person name="Shteynberg D."/>
            <person name="Copley R.R."/>
            <person name="Taylor M.S."/>
            <person name="Riethman H."/>
            <person name="Mudunuri U."/>
            <person name="Peterson J."/>
            <person name="Guyer M."/>
            <person name="Felsenfeld A."/>
            <person name="Old S."/>
            <person name="Mockrin S."/>
            <person name="Collins F.S."/>
        </authorList>
    </citation>
    <scope>NUCLEOTIDE SEQUENCE [LARGE SCALE GENOMIC DNA]</scope>
    <source>
        <strain>Brown Norway</strain>
    </source>
</reference>
<reference key="2">
    <citation type="journal article" date="2004" name="Genome Res.">
        <title>The status, quality, and expansion of the NIH full-length cDNA project: the Mammalian Gene Collection (MGC).</title>
        <authorList>
            <consortium name="The MGC Project Team"/>
        </authorList>
    </citation>
    <scope>NUCLEOTIDE SEQUENCE [LARGE SCALE MRNA] (ISOFORM 2)</scope>
    <source>
        <tissue>Testis</tissue>
    </source>
</reference>
<reference key="3">
    <citation type="journal article" date="2012" name="Nat. Commun.">
        <title>Quantitative maps of protein phosphorylation sites across 14 different rat organs and tissues.</title>
        <authorList>
            <person name="Lundby A."/>
            <person name="Secher A."/>
            <person name="Lage K."/>
            <person name="Nordsborg N.B."/>
            <person name="Dmytriyev A."/>
            <person name="Lundby C."/>
            <person name="Olsen J.V."/>
        </authorList>
    </citation>
    <scope>PHOSPHORYLATION [LARGE SCALE ANALYSIS] AT SER-113</scope>
    <scope>IDENTIFICATION BY MASS SPECTROMETRY [LARGE SCALE ANALYSIS]</scope>
</reference>
<keyword id="KW-0025">Alternative splicing</keyword>
<keyword id="KW-0175">Coiled coil</keyword>
<keyword id="KW-0963">Cytoplasm</keyword>
<keyword id="KW-0206">Cytoskeleton</keyword>
<keyword id="KW-0493">Microtubule</keyword>
<keyword id="KW-0597">Phosphoprotein</keyword>
<keyword id="KW-1185">Reference proteome</keyword>
<keyword id="KW-0677">Repeat</keyword>
<keyword id="KW-0853">WD repeat</keyword>
<proteinExistence type="evidence at protein level"/>
<sequence>MEDGFSSYSSLYDTSSLLQFCNDDSASAASSMEISDRIASLEQRVQMQEDDIQLLKSALADVVRRLNITEEQQAVLNRKGPTKARPLGQTLPLRTTVNNGTVLPKKPSASLPSPSGSRKEMVVPVTKSINRTSSSERVSPGGRRESSGDSKGSRNRTGSTSSSSSGKKNSESKPKEPTFSPEEGYVKMFLRGRPVTMYMPKDQVDSYSLEAKAELPTKRLKLEWVYGYRGRDCRNNLYLLPTGETVYFIASVVVLYNVEEQLQRHYAGHNDDVKCLAVHPDRITIATGQVAGTSKDGKQLPPHVRIWDSVTLNTLHVIGIGFFDRAVTCIAFSKSNGGSHLCAVDDSNDHVLSVWDWQREERLADVKCSNEAVFAADFHPTDTNIIVTCGKSHLYFWTLEGNSLNKKQGLFEKQEKPKFVLCVTFSENGDTITGDSSGNILVWGKGTNRISYAVQGAHEGGIFALCMLRDGTLVSGGGKDRRLISWNGNYQKLHKAEIPEQFGPIRTVAEGKGNVILIGTTRNFVLQGTLTGDFTPITQGHTDELWGLAIHASKPQFLTCGHDKHATLWDAVGHRPVWDKIIEDPAQSSGFHPSGSVVAVGTLTGRWFVFDTETKDLVTVHTDGNEQLSVMRYSPDGNFLAIGSHDNCIYIYGVSDNGRKYTRVGKCSGHSSFITHLDWSVNSQFLVSNSGDYEILYWVPSACKQVVSVETTRDIEWATYTCTLGFHVFGVWPEGSDGTDINAVCRAHEKKLLSTGDDFGKVHLFSYPCSQFRAPSHIYSGHSSHVTNVDFLCEDSHLISTGGKDTSIMQWRVI</sequence>
<accession>Q4V8C3</accession>
<feature type="chain" id="PRO_0000284387" description="Echinoderm microtubule-associated protein-like 1">
    <location>
        <begin position="1"/>
        <end position="814"/>
    </location>
</feature>
<feature type="repeat" description="WD 1">
    <location>
        <begin position="260"/>
        <end position="309"/>
    </location>
</feature>
<feature type="repeat" description="WD 2">
    <location>
        <begin position="314"/>
        <end position="357"/>
    </location>
</feature>
<feature type="repeat" description="WD 3">
    <location>
        <begin position="362"/>
        <end position="399"/>
    </location>
</feature>
<feature type="repeat" description="WD 4">
    <location>
        <begin position="408"/>
        <end position="445"/>
    </location>
</feature>
<feature type="repeat" description="WD 5">
    <location>
        <begin position="449"/>
        <end position="488"/>
    </location>
</feature>
<feature type="repeat" description="WD 6">
    <location>
        <begin position="492"/>
        <end position="529"/>
    </location>
</feature>
<feature type="repeat" description="WD 7">
    <location>
        <begin position="534"/>
        <end position="571"/>
    </location>
</feature>
<feature type="repeat" description="WD 8">
    <location>
        <begin position="577"/>
        <end position="612"/>
    </location>
</feature>
<feature type="repeat" description="WD 9">
    <location>
        <begin position="616"/>
        <end position="654"/>
    </location>
</feature>
<feature type="repeat" description="WD 10">
    <location>
        <begin position="663"/>
        <end position="700"/>
    </location>
</feature>
<feature type="repeat" description="WD 11">
    <location>
        <begin position="708"/>
        <end position="767"/>
    </location>
</feature>
<feature type="repeat" description="WD 12">
    <location>
        <begin position="774"/>
        <end position="813"/>
    </location>
</feature>
<feature type="region of interest" description="Disordered" evidence="6">
    <location>
        <begin position="77"/>
        <end position="185"/>
    </location>
</feature>
<feature type="region of interest" description="Tandem atypical propeller in EMLs" evidence="1">
    <location>
        <begin position="175"/>
        <end position="814"/>
    </location>
</feature>
<feature type="coiled-coil region" evidence="5">
    <location>
        <begin position="31"/>
        <end position="72"/>
    </location>
</feature>
<feature type="compositionally biased region" description="Polar residues" evidence="6">
    <location>
        <begin position="92"/>
        <end position="101"/>
    </location>
</feature>
<feature type="compositionally biased region" description="Low complexity" evidence="6">
    <location>
        <begin position="103"/>
        <end position="115"/>
    </location>
</feature>
<feature type="compositionally biased region" description="Polar residues" evidence="6">
    <location>
        <begin position="127"/>
        <end position="137"/>
    </location>
</feature>
<feature type="compositionally biased region" description="Basic and acidic residues" evidence="6">
    <location>
        <begin position="142"/>
        <end position="152"/>
    </location>
</feature>
<feature type="compositionally biased region" description="Low complexity" evidence="6">
    <location>
        <begin position="155"/>
        <end position="167"/>
    </location>
</feature>
<feature type="modified residue" description="Phosphoserine" evidence="9">
    <location>
        <position position="113"/>
    </location>
</feature>
<feature type="splice variant" id="VSP_024479" description="In isoform 2." evidence="7">
    <location>
        <begin position="1"/>
        <end position="31"/>
    </location>
</feature>